<evidence type="ECO:0000255" key="1">
    <source>
        <dbReference type="HAMAP-Rule" id="MF_00632"/>
    </source>
</evidence>
<dbReference type="EMBL" id="CP001616">
    <property type="protein sequence ID" value="ACQ92423.1"/>
    <property type="molecule type" value="Genomic_DNA"/>
</dbReference>
<dbReference type="RefSeq" id="WP_012729022.1">
    <property type="nucleotide sequence ID" value="NC_012691.1"/>
</dbReference>
<dbReference type="SMR" id="C4LBI8"/>
<dbReference type="STRING" id="595494.Tola_0795"/>
<dbReference type="KEGG" id="tau:Tola_0795"/>
<dbReference type="eggNOG" id="COG1666">
    <property type="taxonomic scope" value="Bacteria"/>
</dbReference>
<dbReference type="HOGENOM" id="CLU_099839_1_0_6"/>
<dbReference type="OrthoDB" id="9801447at2"/>
<dbReference type="Proteomes" id="UP000009073">
    <property type="component" value="Chromosome"/>
</dbReference>
<dbReference type="GO" id="GO:0005829">
    <property type="term" value="C:cytosol"/>
    <property type="evidence" value="ECO:0007669"/>
    <property type="project" value="TreeGrafter"/>
</dbReference>
<dbReference type="GO" id="GO:0000166">
    <property type="term" value="F:nucleotide binding"/>
    <property type="evidence" value="ECO:0007669"/>
    <property type="project" value="TreeGrafter"/>
</dbReference>
<dbReference type="CDD" id="cd11740">
    <property type="entry name" value="YajQ_like"/>
    <property type="match status" value="1"/>
</dbReference>
<dbReference type="FunFam" id="3.30.70.860:FF:000001">
    <property type="entry name" value="UPF0234 protein YajQ"/>
    <property type="match status" value="1"/>
</dbReference>
<dbReference type="Gene3D" id="3.30.70.860">
    <property type="match status" value="1"/>
</dbReference>
<dbReference type="Gene3D" id="3.30.70.990">
    <property type="entry name" value="YajQ-like, domain 2"/>
    <property type="match status" value="1"/>
</dbReference>
<dbReference type="HAMAP" id="MF_00632">
    <property type="entry name" value="YajQ"/>
    <property type="match status" value="1"/>
</dbReference>
<dbReference type="InterPro" id="IPR007551">
    <property type="entry name" value="DUF520"/>
</dbReference>
<dbReference type="InterPro" id="IPR035571">
    <property type="entry name" value="UPF0234-like_C"/>
</dbReference>
<dbReference type="InterPro" id="IPR035570">
    <property type="entry name" value="UPF0234_N"/>
</dbReference>
<dbReference type="InterPro" id="IPR036183">
    <property type="entry name" value="YajQ-like_sf"/>
</dbReference>
<dbReference type="NCBIfam" id="NF003819">
    <property type="entry name" value="PRK05412.1"/>
    <property type="match status" value="1"/>
</dbReference>
<dbReference type="PANTHER" id="PTHR30476">
    <property type="entry name" value="UPF0234 PROTEIN YAJQ"/>
    <property type="match status" value="1"/>
</dbReference>
<dbReference type="PANTHER" id="PTHR30476:SF0">
    <property type="entry name" value="UPF0234 PROTEIN YAJQ"/>
    <property type="match status" value="1"/>
</dbReference>
<dbReference type="Pfam" id="PF04461">
    <property type="entry name" value="DUF520"/>
    <property type="match status" value="1"/>
</dbReference>
<dbReference type="SUPFAM" id="SSF89963">
    <property type="entry name" value="YajQ-like"/>
    <property type="match status" value="2"/>
</dbReference>
<protein>
    <recommendedName>
        <fullName evidence="1">Nucleotide-binding protein Tola_0795</fullName>
    </recommendedName>
</protein>
<organism>
    <name type="scientific">Tolumonas auensis (strain DSM 9187 / NBRC 110442 / TA 4)</name>
    <dbReference type="NCBI Taxonomy" id="595494"/>
    <lineage>
        <taxon>Bacteria</taxon>
        <taxon>Pseudomonadati</taxon>
        <taxon>Pseudomonadota</taxon>
        <taxon>Gammaproteobacteria</taxon>
        <taxon>Aeromonadales</taxon>
        <taxon>Aeromonadaceae</taxon>
        <taxon>Tolumonas</taxon>
    </lineage>
</organism>
<name>Y795_TOLAT</name>
<proteinExistence type="inferred from homology"/>
<keyword id="KW-0547">Nucleotide-binding</keyword>
<keyword id="KW-1185">Reference proteome</keyword>
<sequence length="160" mass="18227">MPSFDIVSEVAMNEVQNAVENANREIQTRFDFRGVDASFELNKEEIKMGADADFQLKQMIEILRDKIVKRGMDTSCLDVGDVEHSGKRYFQVVKLKQGIETDVAKKLIKIIKDAKIKVQTAIQGDEIRVTGKKRDDLQEAMALVRQAELGQAFQFTNFRD</sequence>
<feature type="chain" id="PRO_1000212342" description="Nucleotide-binding protein Tola_0795">
    <location>
        <begin position="1"/>
        <end position="160"/>
    </location>
</feature>
<gene>
    <name type="ordered locus">Tola_0795</name>
</gene>
<reference key="1">
    <citation type="submission" date="2009-05" db="EMBL/GenBank/DDBJ databases">
        <title>Complete sequence of Tolumonas auensis DSM 9187.</title>
        <authorList>
            <consortium name="US DOE Joint Genome Institute"/>
            <person name="Lucas S."/>
            <person name="Copeland A."/>
            <person name="Lapidus A."/>
            <person name="Glavina del Rio T."/>
            <person name="Tice H."/>
            <person name="Bruce D."/>
            <person name="Goodwin L."/>
            <person name="Pitluck S."/>
            <person name="Chertkov O."/>
            <person name="Brettin T."/>
            <person name="Detter J.C."/>
            <person name="Han C."/>
            <person name="Larimer F."/>
            <person name="Land M."/>
            <person name="Hauser L."/>
            <person name="Kyrpides N."/>
            <person name="Mikhailova N."/>
            <person name="Spring S."/>
            <person name="Beller H."/>
        </authorList>
    </citation>
    <scope>NUCLEOTIDE SEQUENCE [LARGE SCALE GENOMIC DNA]</scope>
    <source>
        <strain>DSM 9187 / NBRC 110442 / TA 4</strain>
    </source>
</reference>
<comment type="function">
    <text evidence="1">Nucleotide-binding protein.</text>
</comment>
<comment type="similarity">
    <text evidence="1">Belongs to the YajQ family.</text>
</comment>
<accession>C4LBI8</accession>